<proteinExistence type="inferred from homology"/>
<accession>Q1R6T2</accession>
<gene>
    <name evidence="1" type="primary">glgS</name>
    <name type="ordered locus">UTI89_C3485</name>
</gene>
<comment type="function">
    <text evidence="1">Major determinant of cell surface composition. Negatively regulates motility, adhesion and synthesis of biofilm exopolysaccharides.</text>
</comment>
<comment type="similarity">
    <text evidence="1">Belongs to the GlgS family.</text>
</comment>
<comment type="sequence caution" evidence="2">
    <conflict type="erroneous initiation">
        <sequence resource="EMBL-CDS" id="ABE08932"/>
    </conflict>
</comment>
<evidence type="ECO:0000255" key="1">
    <source>
        <dbReference type="HAMAP-Rule" id="MF_00525"/>
    </source>
</evidence>
<evidence type="ECO:0000305" key="2"/>
<sequence>MDHSLNSLNNFDFLARSFARMHAEGRPVDILAVTGNMDEEHRTWFCARYAWYCQQMMQTRELELEH</sequence>
<dbReference type="EMBL" id="CP000243">
    <property type="protein sequence ID" value="ABE08932.1"/>
    <property type="status" value="ALT_INIT"/>
    <property type="molecule type" value="Genomic_DNA"/>
</dbReference>
<dbReference type="RefSeq" id="WP_001296424.1">
    <property type="nucleotide sequence ID" value="NZ_CP064825.1"/>
</dbReference>
<dbReference type="SMR" id="Q1R6T2"/>
<dbReference type="GeneID" id="75173169"/>
<dbReference type="KEGG" id="eci:UTI89_C3485"/>
<dbReference type="HOGENOM" id="CLU_185971_0_0_6"/>
<dbReference type="Proteomes" id="UP000001952">
    <property type="component" value="Chromosome"/>
</dbReference>
<dbReference type="GO" id="GO:1902201">
    <property type="term" value="P:negative regulation of bacterial-type flagellum-dependent cell motility"/>
    <property type="evidence" value="ECO:0007669"/>
    <property type="project" value="UniProtKB-UniRule"/>
</dbReference>
<dbReference type="GO" id="GO:1900191">
    <property type="term" value="P:negative regulation of single-species biofilm formation"/>
    <property type="evidence" value="ECO:0007669"/>
    <property type="project" value="UniProtKB-UniRule"/>
</dbReference>
<dbReference type="FunFam" id="1.20.970.20:FF:000001">
    <property type="entry name" value="Surface composition regulator"/>
    <property type="match status" value="1"/>
</dbReference>
<dbReference type="Gene3D" id="1.20.970.20">
    <property type="entry name" value="Glycogen synthesis protein GlgS"/>
    <property type="match status" value="1"/>
</dbReference>
<dbReference type="HAMAP" id="MF_00525">
    <property type="entry name" value="GlgS"/>
    <property type="match status" value="1"/>
</dbReference>
<dbReference type="InterPro" id="IPR015065">
    <property type="entry name" value="GlgS"/>
</dbReference>
<dbReference type="InterPro" id="IPR036295">
    <property type="entry name" value="GlgS_sf"/>
</dbReference>
<dbReference type="NCBIfam" id="NF002793">
    <property type="entry name" value="PRK02922.1"/>
    <property type="match status" value="1"/>
</dbReference>
<dbReference type="Pfam" id="PF08971">
    <property type="entry name" value="GlgS"/>
    <property type="match status" value="1"/>
</dbReference>
<dbReference type="SUPFAM" id="SSF109747">
    <property type="entry name" value="Glycogen synthesis protein GlgS"/>
    <property type="match status" value="1"/>
</dbReference>
<protein>
    <recommendedName>
        <fullName evidence="1">Surface composition regulator</fullName>
    </recommendedName>
</protein>
<feature type="chain" id="PRO_0000264144" description="Surface composition regulator">
    <location>
        <begin position="1"/>
        <end position="66"/>
    </location>
</feature>
<organism>
    <name type="scientific">Escherichia coli (strain UTI89 / UPEC)</name>
    <dbReference type="NCBI Taxonomy" id="364106"/>
    <lineage>
        <taxon>Bacteria</taxon>
        <taxon>Pseudomonadati</taxon>
        <taxon>Pseudomonadota</taxon>
        <taxon>Gammaproteobacteria</taxon>
        <taxon>Enterobacterales</taxon>
        <taxon>Enterobacteriaceae</taxon>
        <taxon>Escherichia</taxon>
    </lineage>
</organism>
<reference key="1">
    <citation type="journal article" date="2006" name="Proc. Natl. Acad. Sci. U.S.A.">
        <title>Identification of genes subject to positive selection in uropathogenic strains of Escherichia coli: a comparative genomics approach.</title>
        <authorList>
            <person name="Chen S.L."/>
            <person name="Hung C.-S."/>
            <person name="Xu J."/>
            <person name="Reigstad C.S."/>
            <person name="Magrini V."/>
            <person name="Sabo A."/>
            <person name="Blasiar D."/>
            <person name="Bieri T."/>
            <person name="Meyer R.R."/>
            <person name="Ozersky P."/>
            <person name="Armstrong J.R."/>
            <person name="Fulton R.S."/>
            <person name="Latreille J.P."/>
            <person name="Spieth J."/>
            <person name="Hooton T.M."/>
            <person name="Mardis E.R."/>
            <person name="Hultgren S.J."/>
            <person name="Gordon J.I."/>
        </authorList>
    </citation>
    <scope>NUCLEOTIDE SEQUENCE [LARGE SCALE GENOMIC DNA]</scope>
    <source>
        <strain>UTI89 / UPEC</strain>
    </source>
</reference>
<name>GLGS_ECOUT</name>